<evidence type="ECO:0000250" key="1"/>
<evidence type="ECO:0000250" key="2">
    <source>
        <dbReference type="UniProtKB" id="P06169"/>
    </source>
</evidence>
<evidence type="ECO:0000269" key="3">
    <source>
    </source>
</evidence>
<evidence type="ECO:0000305" key="4"/>
<sequence length="564" mass="61906">MSEITLGRYLFERLNQVDVKTIFGLPGDFNLSLLDKIYEVEGMRWAGNANELNAAYAADGYARIKGMSCIITTFGVGELSALNGIAGSYAEHVGVLHVVGVPSISSQAKQLLLHHTLGNGDFTVFHRMSANISETTAMVTDIATAPAEIDRCIRTTYITQRPVYLGLPANLVDLKVPAKLLETPIDLSLKPNDPEAETEVVDTVLELIKAAKNPVILADACASRHDVKAETKKLIDATQFPSFVTPMGKGSIDEQHPRFGGVYVGTLSRPEVKEAVESADLILSVGALLSDFNTGSFSYSYKTKNIVEFHSDYIKIRNATFPGVQMKFALQKLLNAVPEAIKGYKPVPVPARVPENKSCDPATPLKQEWMWNQVSKFLQEGDVVITETGTSAFGINQTPFPNNAYGISQVLWGSIGFTTGACLGAAFAAEEIDPKKRVILFIGDGSLQLTVQEISTMIRWGLKPYLFVLNNDGYTIERLIHGEKAGYNDIQNWDHLALLPTFGAKDYENHRVATTGEWDKLTQDKEFNKNSKIRMIEVMLPVMDAPTSLIEQAKLTASINAKQE</sequence>
<proteinExistence type="evidence at protein level"/>
<reference key="1">
    <citation type="journal article" date="2004" name="J. Biochem.">
        <title>Purification, characterization, cloning and expression of pyruvate decarboxylase from Torulopsis glabrata IFO005.</title>
        <authorList>
            <person name="Wang Q."/>
            <person name="He P."/>
            <person name="Lu D."/>
            <person name="Shen A."/>
            <person name="Jiang N."/>
        </authorList>
    </citation>
    <scope>NUCLEOTIDE SEQUENCE [GENOMIC DNA]</scope>
    <scope>CATALYTIC ACTIVITY</scope>
    <source>
        <strain>JCM 3699 / NBRC 0005</strain>
    </source>
</reference>
<reference key="2">
    <citation type="journal article" date="2004" name="Nature">
        <title>Genome evolution in yeasts.</title>
        <authorList>
            <person name="Dujon B."/>
            <person name="Sherman D."/>
            <person name="Fischer G."/>
            <person name="Durrens P."/>
            <person name="Casaregola S."/>
            <person name="Lafontaine I."/>
            <person name="de Montigny J."/>
            <person name="Marck C."/>
            <person name="Neuveglise C."/>
            <person name="Talla E."/>
            <person name="Goffard N."/>
            <person name="Frangeul L."/>
            <person name="Aigle M."/>
            <person name="Anthouard V."/>
            <person name="Babour A."/>
            <person name="Barbe V."/>
            <person name="Barnay S."/>
            <person name="Blanchin S."/>
            <person name="Beckerich J.-M."/>
            <person name="Beyne E."/>
            <person name="Bleykasten C."/>
            <person name="Boisrame A."/>
            <person name="Boyer J."/>
            <person name="Cattolico L."/>
            <person name="Confanioleri F."/>
            <person name="de Daruvar A."/>
            <person name="Despons L."/>
            <person name="Fabre E."/>
            <person name="Fairhead C."/>
            <person name="Ferry-Dumazet H."/>
            <person name="Groppi A."/>
            <person name="Hantraye F."/>
            <person name="Hennequin C."/>
            <person name="Jauniaux N."/>
            <person name="Joyet P."/>
            <person name="Kachouri R."/>
            <person name="Kerrest A."/>
            <person name="Koszul R."/>
            <person name="Lemaire M."/>
            <person name="Lesur I."/>
            <person name="Ma L."/>
            <person name="Muller H."/>
            <person name="Nicaud J.-M."/>
            <person name="Nikolski M."/>
            <person name="Oztas S."/>
            <person name="Ozier-Kalogeropoulos O."/>
            <person name="Pellenz S."/>
            <person name="Potier S."/>
            <person name="Richard G.-F."/>
            <person name="Straub M.-L."/>
            <person name="Suleau A."/>
            <person name="Swennen D."/>
            <person name="Tekaia F."/>
            <person name="Wesolowski-Louvel M."/>
            <person name="Westhof E."/>
            <person name="Wirth B."/>
            <person name="Zeniou-Meyer M."/>
            <person name="Zivanovic Y."/>
            <person name="Bolotin-Fukuhara M."/>
            <person name="Thierry A."/>
            <person name="Bouchier C."/>
            <person name="Caudron B."/>
            <person name="Scarpelli C."/>
            <person name="Gaillardin C."/>
            <person name="Weissenbach J."/>
            <person name="Wincker P."/>
            <person name="Souciet J.-L."/>
        </authorList>
    </citation>
    <scope>NUCLEOTIDE SEQUENCE [LARGE SCALE GENOMIC DNA]</scope>
    <source>
        <strain>ATCC 2001 / BCRC 20586 / JCM 3761 / NBRC 0622 / NRRL Y-65 / CBS 138</strain>
    </source>
</reference>
<comment type="catalytic activity">
    <reaction evidence="3">
        <text>a 2-oxocarboxylate + H(+) = an aldehyde + CO2</text>
        <dbReference type="Rhea" id="RHEA:11628"/>
        <dbReference type="ChEBI" id="CHEBI:15378"/>
        <dbReference type="ChEBI" id="CHEBI:16526"/>
        <dbReference type="ChEBI" id="CHEBI:17478"/>
        <dbReference type="ChEBI" id="CHEBI:35179"/>
        <dbReference type="EC" id="4.1.1.1"/>
    </reaction>
</comment>
<comment type="catalytic activity">
    <reaction evidence="2">
        <text>pyruvate + H(+) = acetaldehyde + CO2</text>
        <dbReference type="Rhea" id="RHEA:45484"/>
        <dbReference type="ChEBI" id="CHEBI:15343"/>
        <dbReference type="ChEBI" id="CHEBI:15361"/>
        <dbReference type="ChEBI" id="CHEBI:15378"/>
        <dbReference type="ChEBI" id="CHEBI:16526"/>
    </reaction>
</comment>
<comment type="cofactor">
    <cofactor evidence="2">
        <name>Mg(2+)</name>
        <dbReference type="ChEBI" id="CHEBI:18420"/>
    </cofactor>
    <text evidence="2">Binds 1 Mg(2+) per subunit.</text>
</comment>
<comment type="cofactor">
    <cofactor evidence="2">
        <name>thiamine diphosphate</name>
        <dbReference type="ChEBI" id="CHEBI:58937"/>
    </cofactor>
    <text evidence="2">Binds 1 thiamine pyrophosphate per subunit.</text>
</comment>
<comment type="subunit">
    <text evidence="1">Homotetramer.</text>
</comment>
<comment type="similarity">
    <text evidence="4">Belongs to the TPP enzyme family.</text>
</comment>
<gene>
    <name type="primary">PDC1</name>
    <name type="synonym">PDC</name>
    <name type="ordered locus">CAGL0M07920g</name>
</gene>
<dbReference type="EC" id="4.1.1.1" evidence="3"/>
<dbReference type="EMBL" id="AF545432">
    <property type="protein sequence ID" value="AAN77243.1"/>
    <property type="molecule type" value="Genomic_DNA"/>
</dbReference>
<dbReference type="EMBL" id="CR380959">
    <property type="protein sequence ID" value="CAG62667.1"/>
    <property type="molecule type" value="Genomic_DNA"/>
</dbReference>
<dbReference type="RefSeq" id="XP_449691.1">
    <property type="nucleotide sequence ID" value="XM_449691.1"/>
</dbReference>
<dbReference type="SMR" id="Q6FJA3"/>
<dbReference type="FunCoup" id="Q6FJA3">
    <property type="interactions" value="1067"/>
</dbReference>
<dbReference type="STRING" id="284593.Q6FJA3"/>
<dbReference type="EnsemblFungi" id="CAGL0M07920g-T">
    <property type="protein sequence ID" value="CAGL0M07920g-T-p1"/>
    <property type="gene ID" value="CAGL0M07920g"/>
</dbReference>
<dbReference type="GeneID" id="2891742"/>
<dbReference type="KEGG" id="cgr:2891742"/>
<dbReference type="CGD" id="CAL0137069">
    <property type="gene designation" value="PDC1"/>
</dbReference>
<dbReference type="VEuPathDB" id="FungiDB:B1J91_M07920g"/>
<dbReference type="VEuPathDB" id="FungiDB:CAGL0M07920g"/>
<dbReference type="eggNOG" id="KOG1184">
    <property type="taxonomic scope" value="Eukaryota"/>
</dbReference>
<dbReference type="HOGENOM" id="CLU_013748_0_2_1"/>
<dbReference type="InParanoid" id="Q6FJA3"/>
<dbReference type="OMA" id="IHGPEQR"/>
<dbReference type="BRENDA" id="4.1.1.1">
    <property type="organism ID" value="1113"/>
</dbReference>
<dbReference type="Proteomes" id="UP000002428">
    <property type="component" value="Chromosome M"/>
</dbReference>
<dbReference type="GO" id="GO:0009986">
    <property type="term" value="C:cell surface"/>
    <property type="evidence" value="ECO:0000314"/>
    <property type="project" value="CGD"/>
</dbReference>
<dbReference type="GO" id="GO:0005829">
    <property type="term" value="C:cytosol"/>
    <property type="evidence" value="ECO:0000314"/>
    <property type="project" value="CGD"/>
</dbReference>
<dbReference type="GO" id="GO:0062040">
    <property type="term" value="C:fungal biofilm matrix"/>
    <property type="evidence" value="ECO:0000314"/>
    <property type="project" value="CGD"/>
</dbReference>
<dbReference type="GO" id="GO:0005634">
    <property type="term" value="C:nucleus"/>
    <property type="evidence" value="ECO:0007669"/>
    <property type="project" value="TreeGrafter"/>
</dbReference>
<dbReference type="GO" id="GO:0000287">
    <property type="term" value="F:magnesium ion binding"/>
    <property type="evidence" value="ECO:0007669"/>
    <property type="project" value="InterPro"/>
</dbReference>
<dbReference type="GO" id="GO:0004737">
    <property type="term" value="F:pyruvate decarboxylase activity"/>
    <property type="evidence" value="ECO:0000314"/>
    <property type="project" value="CGD"/>
</dbReference>
<dbReference type="GO" id="GO:0030976">
    <property type="term" value="F:thiamine pyrophosphate binding"/>
    <property type="evidence" value="ECO:0007669"/>
    <property type="project" value="InterPro"/>
</dbReference>
<dbReference type="GO" id="GO:0000949">
    <property type="term" value="P:aromatic amino acid family catabolic process to alcohol via Ehrlich pathway"/>
    <property type="evidence" value="ECO:0007669"/>
    <property type="project" value="TreeGrafter"/>
</dbReference>
<dbReference type="GO" id="GO:0006090">
    <property type="term" value="P:pyruvate metabolic process"/>
    <property type="evidence" value="ECO:0000314"/>
    <property type="project" value="CGD"/>
</dbReference>
<dbReference type="CDD" id="cd02005">
    <property type="entry name" value="TPP_PDC_IPDC"/>
    <property type="match status" value="1"/>
</dbReference>
<dbReference type="CDD" id="cd07038">
    <property type="entry name" value="TPP_PYR_PDC_IPDC_like"/>
    <property type="match status" value="1"/>
</dbReference>
<dbReference type="FunFam" id="3.40.50.1220:FF:000018">
    <property type="entry name" value="Pyruvate decarboxylase isozyme"/>
    <property type="match status" value="1"/>
</dbReference>
<dbReference type="FunFam" id="3.40.50.970:FF:000019">
    <property type="entry name" value="Pyruvate decarboxylase isozyme"/>
    <property type="match status" value="1"/>
</dbReference>
<dbReference type="FunFam" id="3.40.50.970:FF:000024">
    <property type="entry name" value="Pyruvate decarboxylase isozyme"/>
    <property type="match status" value="1"/>
</dbReference>
<dbReference type="Gene3D" id="3.40.50.970">
    <property type="match status" value="2"/>
</dbReference>
<dbReference type="Gene3D" id="3.40.50.1220">
    <property type="entry name" value="TPP-binding domain"/>
    <property type="match status" value="1"/>
</dbReference>
<dbReference type="InterPro" id="IPR029035">
    <property type="entry name" value="DHS-like_NAD/FAD-binding_dom"/>
</dbReference>
<dbReference type="InterPro" id="IPR012110">
    <property type="entry name" value="PDC/IPDC-like"/>
</dbReference>
<dbReference type="InterPro" id="IPR029061">
    <property type="entry name" value="THDP-binding"/>
</dbReference>
<dbReference type="InterPro" id="IPR012000">
    <property type="entry name" value="Thiamin_PyroP_enz_cen_dom"/>
</dbReference>
<dbReference type="InterPro" id="IPR012001">
    <property type="entry name" value="Thiamin_PyroP_enz_TPP-bd_dom"/>
</dbReference>
<dbReference type="InterPro" id="IPR000399">
    <property type="entry name" value="TPP-bd_CS"/>
</dbReference>
<dbReference type="InterPro" id="IPR011766">
    <property type="entry name" value="TPP_enzyme_TPP-bd"/>
</dbReference>
<dbReference type="InterPro" id="IPR047214">
    <property type="entry name" value="TPP_PDC_IPDC"/>
</dbReference>
<dbReference type="InterPro" id="IPR047213">
    <property type="entry name" value="TPP_PYR_PDC_IPDC-like"/>
</dbReference>
<dbReference type="PANTHER" id="PTHR43452">
    <property type="entry name" value="PYRUVATE DECARBOXYLASE"/>
    <property type="match status" value="1"/>
</dbReference>
<dbReference type="PANTHER" id="PTHR43452:SF30">
    <property type="entry name" value="PYRUVATE DECARBOXYLASE ISOZYME 1-RELATED"/>
    <property type="match status" value="1"/>
</dbReference>
<dbReference type="Pfam" id="PF02775">
    <property type="entry name" value="TPP_enzyme_C"/>
    <property type="match status" value="1"/>
</dbReference>
<dbReference type="Pfam" id="PF00205">
    <property type="entry name" value="TPP_enzyme_M"/>
    <property type="match status" value="1"/>
</dbReference>
<dbReference type="Pfam" id="PF02776">
    <property type="entry name" value="TPP_enzyme_N"/>
    <property type="match status" value="1"/>
</dbReference>
<dbReference type="PIRSF" id="PIRSF036565">
    <property type="entry name" value="Pyruvt_ip_decrb"/>
    <property type="match status" value="1"/>
</dbReference>
<dbReference type="SUPFAM" id="SSF52467">
    <property type="entry name" value="DHS-like NAD/FAD-binding domain"/>
    <property type="match status" value="1"/>
</dbReference>
<dbReference type="SUPFAM" id="SSF52518">
    <property type="entry name" value="Thiamin diphosphate-binding fold (THDP-binding)"/>
    <property type="match status" value="2"/>
</dbReference>
<dbReference type="PROSITE" id="PS00187">
    <property type="entry name" value="TPP_ENZYMES"/>
    <property type="match status" value="1"/>
</dbReference>
<feature type="chain" id="PRO_0000090762" description="Pyruvate decarboxylase">
    <location>
        <begin position="1"/>
        <end position="564"/>
    </location>
</feature>
<feature type="binding site" evidence="2">
    <location>
        <position position="28"/>
    </location>
    <ligand>
        <name>pyruvate</name>
        <dbReference type="ChEBI" id="CHEBI:15361"/>
        <note>ligand shared between two neighboring subunits</note>
    </ligand>
</feature>
<feature type="binding site" evidence="2">
    <location>
        <position position="115"/>
    </location>
    <ligand>
        <name>pyruvate</name>
        <dbReference type="ChEBI" id="CHEBI:15361"/>
        <note>ligand shared between two neighboring subunits</note>
    </ligand>
</feature>
<feature type="binding site" evidence="2">
    <location>
        <position position="390"/>
    </location>
    <ligand>
        <name>thiamine diphosphate</name>
        <dbReference type="ChEBI" id="CHEBI:58937"/>
    </ligand>
</feature>
<feature type="binding site" evidence="2">
    <location>
        <begin position="413"/>
        <end position="415"/>
    </location>
    <ligand>
        <name>thiamine diphosphate</name>
        <dbReference type="ChEBI" id="CHEBI:58937"/>
    </ligand>
</feature>
<feature type="binding site" evidence="2">
    <location>
        <position position="444"/>
    </location>
    <ligand>
        <name>Mg(2+)</name>
        <dbReference type="ChEBI" id="CHEBI:18420"/>
    </ligand>
</feature>
<feature type="binding site" evidence="2">
    <location>
        <begin position="445"/>
        <end position="446"/>
    </location>
    <ligand>
        <name>thiamine diphosphate</name>
        <dbReference type="ChEBI" id="CHEBI:58937"/>
    </ligand>
</feature>
<feature type="binding site" evidence="2">
    <location>
        <begin position="471"/>
        <end position="476"/>
    </location>
    <ligand>
        <name>thiamine diphosphate</name>
        <dbReference type="ChEBI" id="CHEBI:58937"/>
    </ligand>
</feature>
<feature type="binding site" evidence="2">
    <location>
        <position position="471"/>
    </location>
    <ligand>
        <name>Mg(2+)</name>
        <dbReference type="ChEBI" id="CHEBI:18420"/>
    </ligand>
</feature>
<feature type="binding site" evidence="2">
    <location>
        <position position="473"/>
    </location>
    <ligand>
        <name>Mg(2+)</name>
        <dbReference type="ChEBI" id="CHEBI:18420"/>
    </ligand>
</feature>
<feature type="binding site" evidence="2">
    <location>
        <position position="477"/>
    </location>
    <ligand>
        <name>pyruvate</name>
        <dbReference type="ChEBI" id="CHEBI:15361"/>
        <note>ligand shared between two neighboring subunits</note>
    </ligand>
</feature>
<feature type="sequence conflict" description="In Ref. 1; AAN77243." evidence="4" ref="1">
    <original>I</original>
    <variation>T</variation>
    <location>
        <position position="559"/>
    </location>
</feature>
<feature type="sequence conflict" description="In Ref. 1; AAN77243." evidence="4" ref="1">
    <location>
        <position position="564"/>
    </location>
</feature>
<name>PDC1_CANGA</name>
<keyword id="KW-0210">Decarboxylase</keyword>
<keyword id="KW-0456">Lyase</keyword>
<keyword id="KW-0460">Magnesium</keyword>
<keyword id="KW-0479">Metal-binding</keyword>
<keyword id="KW-1185">Reference proteome</keyword>
<keyword id="KW-0786">Thiamine pyrophosphate</keyword>
<accession>Q6FJA3</accession>
<accession>Q8J134</accession>
<protein>
    <recommendedName>
        <fullName>Pyruvate decarboxylase</fullName>
        <ecNumber evidence="3">4.1.1.1</ecNumber>
    </recommendedName>
</protein>
<organism>
    <name type="scientific">Candida glabrata (strain ATCC 2001 / BCRC 20586 / JCM 3761 / NBRC 0622 / NRRL Y-65 / CBS 138)</name>
    <name type="common">Yeast</name>
    <name type="synonym">Nakaseomyces glabratus</name>
    <dbReference type="NCBI Taxonomy" id="284593"/>
    <lineage>
        <taxon>Eukaryota</taxon>
        <taxon>Fungi</taxon>
        <taxon>Dikarya</taxon>
        <taxon>Ascomycota</taxon>
        <taxon>Saccharomycotina</taxon>
        <taxon>Saccharomycetes</taxon>
        <taxon>Saccharomycetales</taxon>
        <taxon>Saccharomycetaceae</taxon>
        <taxon>Nakaseomyces</taxon>
    </lineage>
</organism>